<reference key="1">
    <citation type="journal article" date="1998" name="Science">
        <title>Genome sequence of an obligate intracellular pathogen of humans: Chlamydia trachomatis.</title>
        <authorList>
            <person name="Stephens R.S."/>
            <person name="Kalman S."/>
            <person name="Lammel C.J."/>
            <person name="Fan J."/>
            <person name="Marathe R."/>
            <person name="Aravind L."/>
            <person name="Mitchell W.P."/>
            <person name="Olinger L."/>
            <person name="Tatusov R.L."/>
            <person name="Zhao Q."/>
            <person name="Koonin E.V."/>
            <person name="Davis R.W."/>
        </authorList>
    </citation>
    <scope>NUCLEOTIDE SEQUENCE [LARGE SCALE GENOMIC DNA]</scope>
    <source>
        <strain>ATCC VR-885 / DSM 19411 / UW-3/Cx</strain>
    </source>
</reference>
<protein>
    <recommendedName>
        <fullName evidence="1">Small ribosomal subunit protein uS10</fullName>
    </recommendedName>
    <alternativeName>
        <fullName evidence="2">30S ribosomal protein S10</fullName>
    </alternativeName>
</protein>
<proteinExistence type="inferred from homology"/>
<sequence length="105" mass="11869">MKQQKQRIRIRLKGFDQGQLDQSTANIVETAKRTGARVVGPIPLPTKREVYTVLRSPHVDKKSREQFEIRTHKRLIDILDPTGKTIDALKMLSLPAGVDIKIKAA</sequence>
<dbReference type="EMBL" id="AE001273">
    <property type="protein sequence ID" value="AAC68035.1"/>
    <property type="molecule type" value="Genomic_DNA"/>
</dbReference>
<dbReference type="PIR" id="E71514">
    <property type="entry name" value="E71514"/>
</dbReference>
<dbReference type="RefSeq" id="NP_219948.1">
    <property type="nucleotide sequence ID" value="NC_000117.1"/>
</dbReference>
<dbReference type="RefSeq" id="WP_009871791.1">
    <property type="nucleotide sequence ID" value="NC_000117.1"/>
</dbReference>
<dbReference type="SMR" id="P0CE02"/>
<dbReference type="FunCoup" id="P0CE02">
    <property type="interactions" value="285"/>
</dbReference>
<dbReference type="STRING" id="272561.CT_436"/>
<dbReference type="EnsemblBacteria" id="AAC68035">
    <property type="protein sequence ID" value="AAC68035"/>
    <property type="gene ID" value="CT_436"/>
</dbReference>
<dbReference type="GeneID" id="884210"/>
<dbReference type="GeneID" id="93065269"/>
<dbReference type="KEGG" id="ctr:CT_436"/>
<dbReference type="PATRIC" id="fig|272561.5.peg.471"/>
<dbReference type="HOGENOM" id="CLU_122625_1_3_0"/>
<dbReference type="InParanoid" id="P0CE02"/>
<dbReference type="OrthoDB" id="9804464at2"/>
<dbReference type="PRO" id="PR:P0CE02"/>
<dbReference type="Proteomes" id="UP000000431">
    <property type="component" value="Chromosome"/>
</dbReference>
<dbReference type="GO" id="GO:0015935">
    <property type="term" value="C:small ribosomal subunit"/>
    <property type="evidence" value="ECO:0000318"/>
    <property type="project" value="GO_Central"/>
</dbReference>
<dbReference type="GO" id="GO:0003735">
    <property type="term" value="F:structural constituent of ribosome"/>
    <property type="evidence" value="ECO:0000318"/>
    <property type="project" value="GO_Central"/>
</dbReference>
<dbReference type="GO" id="GO:0000049">
    <property type="term" value="F:tRNA binding"/>
    <property type="evidence" value="ECO:0007669"/>
    <property type="project" value="UniProtKB-UniRule"/>
</dbReference>
<dbReference type="GO" id="GO:0006412">
    <property type="term" value="P:translation"/>
    <property type="evidence" value="ECO:0007669"/>
    <property type="project" value="UniProtKB-UniRule"/>
</dbReference>
<dbReference type="FunFam" id="3.30.70.600:FF:000001">
    <property type="entry name" value="30S ribosomal protein S10"/>
    <property type="match status" value="1"/>
</dbReference>
<dbReference type="Gene3D" id="3.30.70.600">
    <property type="entry name" value="Ribosomal protein S10 domain"/>
    <property type="match status" value="1"/>
</dbReference>
<dbReference type="HAMAP" id="MF_00508">
    <property type="entry name" value="Ribosomal_uS10"/>
    <property type="match status" value="1"/>
</dbReference>
<dbReference type="InterPro" id="IPR001848">
    <property type="entry name" value="Ribosomal_uS10"/>
</dbReference>
<dbReference type="InterPro" id="IPR018268">
    <property type="entry name" value="Ribosomal_uS10_CS"/>
</dbReference>
<dbReference type="InterPro" id="IPR027486">
    <property type="entry name" value="Ribosomal_uS10_dom"/>
</dbReference>
<dbReference type="InterPro" id="IPR036838">
    <property type="entry name" value="Ribosomal_uS10_dom_sf"/>
</dbReference>
<dbReference type="NCBIfam" id="NF001861">
    <property type="entry name" value="PRK00596.1"/>
    <property type="match status" value="1"/>
</dbReference>
<dbReference type="NCBIfam" id="TIGR01049">
    <property type="entry name" value="rpsJ_bact"/>
    <property type="match status" value="1"/>
</dbReference>
<dbReference type="PANTHER" id="PTHR11700">
    <property type="entry name" value="30S RIBOSOMAL PROTEIN S10 FAMILY MEMBER"/>
    <property type="match status" value="1"/>
</dbReference>
<dbReference type="Pfam" id="PF00338">
    <property type="entry name" value="Ribosomal_S10"/>
    <property type="match status" value="1"/>
</dbReference>
<dbReference type="PRINTS" id="PR00971">
    <property type="entry name" value="RIBOSOMALS10"/>
</dbReference>
<dbReference type="SMART" id="SM01403">
    <property type="entry name" value="Ribosomal_S10"/>
    <property type="match status" value="1"/>
</dbReference>
<dbReference type="SUPFAM" id="SSF54999">
    <property type="entry name" value="Ribosomal protein S10"/>
    <property type="match status" value="1"/>
</dbReference>
<dbReference type="PROSITE" id="PS00361">
    <property type="entry name" value="RIBOSOMAL_S10"/>
    <property type="match status" value="1"/>
</dbReference>
<organism>
    <name type="scientific">Chlamydia trachomatis serovar D (strain ATCC VR-885 / DSM 19411 / UW-3/Cx)</name>
    <dbReference type="NCBI Taxonomy" id="272561"/>
    <lineage>
        <taxon>Bacteria</taxon>
        <taxon>Pseudomonadati</taxon>
        <taxon>Chlamydiota</taxon>
        <taxon>Chlamydiia</taxon>
        <taxon>Chlamydiales</taxon>
        <taxon>Chlamydiaceae</taxon>
        <taxon>Chlamydia/Chlamydophila group</taxon>
        <taxon>Chlamydia</taxon>
    </lineage>
</organism>
<evidence type="ECO:0000255" key="1">
    <source>
        <dbReference type="HAMAP-Rule" id="MF_00508"/>
    </source>
</evidence>
<evidence type="ECO:0000305" key="2"/>
<comment type="function">
    <text evidence="1">Involved in the binding of tRNA to the ribosomes.</text>
</comment>
<comment type="subunit">
    <text evidence="1">Part of the 30S ribosomal subunit.</text>
</comment>
<comment type="similarity">
    <text evidence="1">Belongs to the universal ribosomal protein uS10 family.</text>
</comment>
<gene>
    <name evidence="1" type="primary">rpsJ</name>
    <name type="synonym">rs10</name>
    <name type="ordered locus">CT_436</name>
</gene>
<accession>P0CE02</accession>
<accession>O84443</accession>
<accession>P0A4A1</accession>
<accession>Q9ZG26</accession>
<feature type="chain" id="PRO_0000146519" description="Small ribosomal subunit protein uS10">
    <location>
        <begin position="1"/>
        <end position="105"/>
    </location>
</feature>
<keyword id="KW-1185">Reference proteome</keyword>
<keyword id="KW-0687">Ribonucleoprotein</keyword>
<keyword id="KW-0689">Ribosomal protein</keyword>
<name>RS10_CHLTR</name>